<feature type="chain" id="PRO_0000156646" description="Homoserine kinase">
    <location>
        <begin position="1"/>
        <end position="292"/>
    </location>
</feature>
<feature type="binding site" evidence="1">
    <location>
        <begin position="81"/>
        <end position="91"/>
    </location>
    <ligand>
        <name>ATP</name>
        <dbReference type="ChEBI" id="CHEBI:30616"/>
    </ligand>
</feature>
<sequence>MKVYAPATIANFGPGFDVFGLAIETPRDTVIAKESDDFRIEVEGYKVPENDENVALVAAKALFKLVGEEGGIYLKLKKGIRPKSGLGSSGASSIAGAVAAARILGVEDDEIIIRAALEGERKASGSPHGDNVVPSYYGNFTIVESLNPLRVHNIEVDFKVVVILPSVEVPTSEARKVLPKKVPLKDAVKNIALASSLVLALKEGNLEEVGRLLEDHLALPYRLSLVPWFPKVKEAAKEAGAYGVMISGSGPAVFALGENLKEIGKAMKEAFESFGIEAEYWVTKVGRGAKWC</sequence>
<keyword id="KW-0028">Amino-acid biosynthesis</keyword>
<keyword id="KW-0067">ATP-binding</keyword>
<keyword id="KW-0963">Cytoplasm</keyword>
<keyword id="KW-0418">Kinase</keyword>
<keyword id="KW-0547">Nucleotide-binding</keyword>
<keyword id="KW-1185">Reference proteome</keyword>
<keyword id="KW-0791">Threonine biosynthesis</keyword>
<keyword id="KW-0808">Transferase</keyword>
<evidence type="ECO:0000255" key="1">
    <source>
        <dbReference type="HAMAP-Rule" id="MF_00384"/>
    </source>
</evidence>
<dbReference type="EC" id="2.7.1.39" evidence="1"/>
<dbReference type="EMBL" id="AE009950">
    <property type="protein sequence ID" value="AAL81178.1"/>
    <property type="molecule type" value="Genomic_DNA"/>
</dbReference>
<dbReference type="RefSeq" id="WP_011012191.1">
    <property type="nucleotide sequence ID" value="NZ_CP023154.1"/>
</dbReference>
<dbReference type="SMR" id="Q8U1Z9"/>
<dbReference type="STRING" id="186497.PF1054"/>
<dbReference type="PaxDb" id="186497-PF1054"/>
<dbReference type="KEGG" id="pfu:PF1054"/>
<dbReference type="PATRIC" id="fig|186497.12.peg.1115"/>
<dbReference type="eggNOG" id="arCOG01027">
    <property type="taxonomic scope" value="Archaea"/>
</dbReference>
<dbReference type="HOGENOM" id="CLU_041243_1_1_2"/>
<dbReference type="OrthoDB" id="28273at2157"/>
<dbReference type="PhylomeDB" id="Q8U1Z9"/>
<dbReference type="UniPathway" id="UPA00050">
    <property type="reaction ID" value="UER00064"/>
</dbReference>
<dbReference type="Proteomes" id="UP000001013">
    <property type="component" value="Chromosome"/>
</dbReference>
<dbReference type="GO" id="GO:0005737">
    <property type="term" value="C:cytoplasm"/>
    <property type="evidence" value="ECO:0007669"/>
    <property type="project" value="UniProtKB-SubCell"/>
</dbReference>
<dbReference type="GO" id="GO:0005524">
    <property type="term" value="F:ATP binding"/>
    <property type="evidence" value="ECO:0007669"/>
    <property type="project" value="UniProtKB-UniRule"/>
</dbReference>
<dbReference type="GO" id="GO:0004413">
    <property type="term" value="F:homoserine kinase activity"/>
    <property type="evidence" value="ECO:0007669"/>
    <property type="project" value="UniProtKB-UniRule"/>
</dbReference>
<dbReference type="GO" id="GO:0009088">
    <property type="term" value="P:threonine biosynthetic process"/>
    <property type="evidence" value="ECO:0007669"/>
    <property type="project" value="UniProtKB-UniRule"/>
</dbReference>
<dbReference type="Gene3D" id="3.30.230.10">
    <property type="match status" value="1"/>
</dbReference>
<dbReference type="Gene3D" id="3.30.70.890">
    <property type="entry name" value="GHMP kinase, C-terminal domain"/>
    <property type="match status" value="1"/>
</dbReference>
<dbReference type="HAMAP" id="MF_00384">
    <property type="entry name" value="Homoser_kinase"/>
    <property type="match status" value="1"/>
</dbReference>
<dbReference type="InterPro" id="IPR013750">
    <property type="entry name" value="GHMP_kinase_C_dom"/>
</dbReference>
<dbReference type="InterPro" id="IPR036554">
    <property type="entry name" value="GHMP_kinase_C_sf"/>
</dbReference>
<dbReference type="InterPro" id="IPR006204">
    <property type="entry name" value="GHMP_kinase_N_dom"/>
</dbReference>
<dbReference type="InterPro" id="IPR000870">
    <property type="entry name" value="Homoserine_kinase"/>
</dbReference>
<dbReference type="InterPro" id="IPR020568">
    <property type="entry name" value="Ribosomal_Su5_D2-typ_SF"/>
</dbReference>
<dbReference type="InterPro" id="IPR014721">
    <property type="entry name" value="Ribsml_uS5_D2-typ_fold_subgr"/>
</dbReference>
<dbReference type="NCBIfam" id="NF002288">
    <property type="entry name" value="PRK01212.1-4"/>
    <property type="match status" value="1"/>
</dbReference>
<dbReference type="NCBIfam" id="TIGR00191">
    <property type="entry name" value="thrB"/>
    <property type="match status" value="1"/>
</dbReference>
<dbReference type="PANTHER" id="PTHR20861:SF1">
    <property type="entry name" value="HOMOSERINE KINASE"/>
    <property type="match status" value="1"/>
</dbReference>
<dbReference type="PANTHER" id="PTHR20861">
    <property type="entry name" value="HOMOSERINE/4-DIPHOSPHOCYTIDYL-2-C-METHYL-D-ERYTHRITOL KINASE"/>
    <property type="match status" value="1"/>
</dbReference>
<dbReference type="Pfam" id="PF08544">
    <property type="entry name" value="GHMP_kinases_C"/>
    <property type="match status" value="1"/>
</dbReference>
<dbReference type="Pfam" id="PF00288">
    <property type="entry name" value="GHMP_kinases_N"/>
    <property type="match status" value="1"/>
</dbReference>
<dbReference type="PIRSF" id="PIRSF000676">
    <property type="entry name" value="Homoser_kin"/>
    <property type="match status" value="1"/>
</dbReference>
<dbReference type="PRINTS" id="PR00958">
    <property type="entry name" value="HOMSERKINASE"/>
</dbReference>
<dbReference type="SUPFAM" id="SSF55060">
    <property type="entry name" value="GHMP Kinase, C-terminal domain"/>
    <property type="match status" value="1"/>
</dbReference>
<dbReference type="SUPFAM" id="SSF54211">
    <property type="entry name" value="Ribosomal protein S5 domain 2-like"/>
    <property type="match status" value="1"/>
</dbReference>
<comment type="function">
    <text evidence="1">Catalyzes the ATP-dependent phosphorylation of L-homoserine to L-homoserine phosphate.</text>
</comment>
<comment type="catalytic activity">
    <reaction evidence="1">
        <text>L-homoserine + ATP = O-phospho-L-homoserine + ADP + H(+)</text>
        <dbReference type="Rhea" id="RHEA:13985"/>
        <dbReference type="ChEBI" id="CHEBI:15378"/>
        <dbReference type="ChEBI" id="CHEBI:30616"/>
        <dbReference type="ChEBI" id="CHEBI:57476"/>
        <dbReference type="ChEBI" id="CHEBI:57590"/>
        <dbReference type="ChEBI" id="CHEBI:456216"/>
        <dbReference type="EC" id="2.7.1.39"/>
    </reaction>
</comment>
<comment type="pathway">
    <text evidence="1">Amino-acid biosynthesis; L-threonine biosynthesis; L-threonine from L-aspartate: step 4/5.</text>
</comment>
<comment type="subcellular location">
    <subcellularLocation>
        <location evidence="1">Cytoplasm</location>
    </subcellularLocation>
</comment>
<comment type="similarity">
    <text evidence="1">Belongs to the GHMP kinase family. Homoserine kinase subfamily.</text>
</comment>
<reference key="1">
    <citation type="journal article" date="1999" name="Genetics">
        <title>Divergence of the hyperthermophilic archaea Pyrococcus furiosus and P. horikoshii inferred from complete genomic sequences.</title>
        <authorList>
            <person name="Maeder D.L."/>
            <person name="Weiss R.B."/>
            <person name="Dunn D.M."/>
            <person name="Cherry J.L."/>
            <person name="Gonzalez J.M."/>
            <person name="DiRuggiero J."/>
            <person name="Robb F.T."/>
        </authorList>
    </citation>
    <scope>NUCLEOTIDE SEQUENCE [LARGE SCALE GENOMIC DNA]</scope>
    <source>
        <strain>ATCC 43587 / DSM 3638 / JCM 8422 / Vc1</strain>
    </source>
</reference>
<protein>
    <recommendedName>
        <fullName evidence="1">Homoserine kinase</fullName>
        <shortName evidence="1">HK</shortName>
        <shortName evidence="1">HSK</shortName>
        <ecNumber evidence="1">2.7.1.39</ecNumber>
    </recommendedName>
</protein>
<accession>Q8U1Z9</accession>
<name>KHSE_PYRFU</name>
<gene>
    <name evidence="1" type="primary">thrB</name>
    <name type="ordered locus">PF1054</name>
</gene>
<organism>
    <name type="scientific">Pyrococcus furiosus (strain ATCC 43587 / DSM 3638 / JCM 8422 / Vc1)</name>
    <dbReference type="NCBI Taxonomy" id="186497"/>
    <lineage>
        <taxon>Archaea</taxon>
        <taxon>Methanobacteriati</taxon>
        <taxon>Methanobacteriota</taxon>
        <taxon>Thermococci</taxon>
        <taxon>Thermococcales</taxon>
        <taxon>Thermococcaceae</taxon>
        <taxon>Pyrococcus</taxon>
    </lineage>
</organism>
<proteinExistence type="inferred from homology"/>